<sequence length="408" mass="44934">MARNIVVSGIRRPPTEDLPVELVERKGLGHPDYIADSISEYVSRELSKYYMENFGTILHHNVDKVLVIGGNAQVKFGGGEIIEPIRIIVSGRATTEVKSSTGVVKVPIGSIILSAARKFIIDNFRFLNPDQHLVIDYKVGQGSVDLVGVYELGVSSGGVPLANDTSIGVGFAPLTVTERLVYETERLLNSREFKARYPEVGEDVKVMGLRRGRKITLTVASALVSRLIKDKDHYISVKEDVVNAIYDNAVKLANGYEVEVHLNTADNPEHGIYYLTYTGTSAEHGDDGMTGRGNRANGLITPMRPMSMEATAGKNPVSHIGKIYYVLANMIAKRIHDEVKGTREVYVYLLSQIGKPIDNPLIANVEIITNEGEVTSEMKREAEAITDEEISRVTRLTSMFVKGEITPF</sequence>
<gene>
    <name evidence="1" type="primary">mat</name>
    <name type="ordered locus">Cmaq_0865</name>
</gene>
<comment type="function">
    <text evidence="1">Catalyzes the formation of S-adenosylmethionine from methionine and ATP.</text>
</comment>
<comment type="catalytic activity">
    <reaction evidence="1">
        <text>L-methionine + ATP + H2O = S-adenosyl-L-methionine + phosphate + diphosphate</text>
        <dbReference type="Rhea" id="RHEA:21080"/>
        <dbReference type="ChEBI" id="CHEBI:15377"/>
        <dbReference type="ChEBI" id="CHEBI:30616"/>
        <dbReference type="ChEBI" id="CHEBI:33019"/>
        <dbReference type="ChEBI" id="CHEBI:43474"/>
        <dbReference type="ChEBI" id="CHEBI:57844"/>
        <dbReference type="ChEBI" id="CHEBI:59789"/>
        <dbReference type="EC" id="2.5.1.6"/>
    </reaction>
</comment>
<comment type="cofactor">
    <cofactor evidence="1">
        <name>Mg(2+)</name>
        <dbReference type="ChEBI" id="CHEBI:18420"/>
    </cofactor>
</comment>
<comment type="pathway">
    <text evidence="1">Amino-acid biosynthesis; S-adenosyl-L-methionine biosynthesis; S-adenosyl-L-methionine from L-methionine: step 1/1.</text>
</comment>
<comment type="similarity">
    <text evidence="1">Belongs to the AdoMet synthase 2 family.</text>
</comment>
<keyword id="KW-0067">ATP-binding</keyword>
<keyword id="KW-0460">Magnesium</keyword>
<keyword id="KW-0547">Nucleotide-binding</keyword>
<keyword id="KW-0554">One-carbon metabolism</keyword>
<keyword id="KW-1185">Reference proteome</keyword>
<keyword id="KW-0808">Transferase</keyword>
<dbReference type="EC" id="2.5.1.6" evidence="1"/>
<dbReference type="EMBL" id="CP000852">
    <property type="protein sequence ID" value="ABW01700.1"/>
    <property type="molecule type" value="Genomic_DNA"/>
</dbReference>
<dbReference type="RefSeq" id="WP_012185919.1">
    <property type="nucleotide sequence ID" value="NC_009954.1"/>
</dbReference>
<dbReference type="SMR" id="A8MD44"/>
<dbReference type="STRING" id="397948.Cmaq_0865"/>
<dbReference type="GeneID" id="5708918"/>
<dbReference type="KEGG" id="cma:Cmaq_0865"/>
<dbReference type="eggNOG" id="arCOG01678">
    <property type="taxonomic scope" value="Archaea"/>
</dbReference>
<dbReference type="HOGENOM" id="CLU_057642_0_0_2"/>
<dbReference type="OrthoDB" id="204488at2157"/>
<dbReference type="UniPathway" id="UPA00315">
    <property type="reaction ID" value="UER00080"/>
</dbReference>
<dbReference type="Proteomes" id="UP000001137">
    <property type="component" value="Chromosome"/>
</dbReference>
<dbReference type="GO" id="GO:0005524">
    <property type="term" value="F:ATP binding"/>
    <property type="evidence" value="ECO:0007669"/>
    <property type="project" value="UniProtKB-UniRule"/>
</dbReference>
<dbReference type="GO" id="GO:0000287">
    <property type="term" value="F:magnesium ion binding"/>
    <property type="evidence" value="ECO:0007669"/>
    <property type="project" value="UniProtKB-UniRule"/>
</dbReference>
<dbReference type="GO" id="GO:0004478">
    <property type="term" value="F:methionine adenosyltransferase activity"/>
    <property type="evidence" value="ECO:0007669"/>
    <property type="project" value="UniProtKB-UniRule"/>
</dbReference>
<dbReference type="GO" id="GO:0006730">
    <property type="term" value="P:one-carbon metabolic process"/>
    <property type="evidence" value="ECO:0007669"/>
    <property type="project" value="UniProtKB-KW"/>
</dbReference>
<dbReference type="GO" id="GO:0006556">
    <property type="term" value="P:S-adenosylmethionine biosynthetic process"/>
    <property type="evidence" value="ECO:0007669"/>
    <property type="project" value="UniProtKB-UniRule"/>
</dbReference>
<dbReference type="Gene3D" id="3.30.300.10">
    <property type="match status" value="1"/>
</dbReference>
<dbReference type="Gene3D" id="3.30.300.280">
    <property type="entry name" value="S-adenosylmethionine synthetase, C-terminal domain"/>
    <property type="match status" value="1"/>
</dbReference>
<dbReference type="Gene3D" id="3.30.300.340">
    <property type="entry name" value="S-adenosylmethionine synthetase, N-terminal domain"/>
    <property type="match status" value="1"/>
</dbReference>
<dbReference type="HAMAP" id="MF_00136">
    <property type="entry name" value="S_AdoMet_synth2"/>
    <property type="match status" value="1"/>
</dbReference>
<dbReference type="InterPro" id="IPR042543">
    <property type="entry name" value="AdoMet_synthase_2"/>
</dbReference>
<dbReference type="InterPro" id="IPR027790">
    <property type="entry name" value="AdoMet_synthase_2_family"/>
</dbReference>
<dbReference type="InterPro" id="IPR042544">
    <property type="entry name" value="AdoMet_synthase_3"/>
</dbReference>
<dbReference type="InterPro" id="IPR002795">
    <property type="entry name" value="S-AdoMet_synthetase_arc"/>
</dbReference>
<dbReference type="NCBIfam" id="NF003365">
    <property type="entry name" value="PRK04439.1-4"/>
    <property type="match status" value="1"/>
</dbReference>
<dbReference type="NCBIfam" id="NF003366">
    <property type="entry name" value="PRK04439.1-5"/>
    <property type="match status" value="1"/>
</dbReference>
<dbReference type="PANTHER" id="PTHR36697">
    <property type="entry name" value="S-ADENOSYLMETHIONINE SYNTHASE"/>
    <property type="match status" value="1"/>
</dbReference>
<dbReference type="PANTHER" id="PTHR36697:SF1">
    <property type="entry name" value="S-ADENOSYLMETHIONINE SYNTHASE"/>
    <property type="match status" value="1"/>
</dbReference>
<dbReference type="Pfam" id="PF01941">
    <property type="entry name" value="AdoMet_Synthase"/>
    <property type="match status" value="1"/>
</dbReference>
<proteinExistence type="inferred from homology"/>
<organism>
    <name type="scientific">Caldivirga maquilingensis (strain ATCC 700844 / DSM 13496 / JCM 10307 / IC-167)</name>
    <dbReference type="NCBI Taxonomy" id="397948"/>
    <lineage>
        <taxon>Archaea</taxon>
        <taxon>Thermoproteota</taxon>
        <taxon>Thermoprotei</taxon>
        <taxon>Thermoproteales</taxon>
        <taxon>Thermoproteaceae</taxon>
        <taxon>Caldivirga</taxon>
    </lineage>
</organism>
<evidence type="ECO:0000255" key="1">
    <source>
        <dbReference type="HAMAP-Rule" id="MF_00136"/>
    </source>
</evidence>
<accession>A8MD44</accession>
<name>METK_CALMQ</name>
<protein>
    <recommendedName>
        <fullName evidence="1">S-adenosylmethionine synthase</fullName>
        <shortName evidence="1">AdoMet synthase</shortName>
        <ecNumber evidence="1">2.5.1.6</ecNumber>
    </recommendedName>
    <alternativeName>
        <fullName evidence="1">Methionine adenosyltransferase</fullName>
    </alternativeName>
</protein>
<feature type="chain" id="PRO_1000076442" description="S-adenosylmethionine synthase">
    <location>
        <begin position="1"/>
        <end position="408"/>
    </location>
</feature>
<feature type="binding site" evidence="1">
    <location>
        <begin position="140"/>
        <end position="145"/>
    </location>
    <ligand>
        <name>ATP</name>
        <dbReference type="ChEBI" id="CHEBI:30616"/>
    </ligand>
</feature>
<reference key="1">
    <citation type="submission" date="2007-10" db="EMBL/GenBank/DDBJ databases">
        <title>Complete sequence of Caldivirga maquilingensis IC-167.</title>
        <authorList>
            <consortium name="US DOE Joint Genome Institute"/>
            <person name="Copeland A."/>
            <person name="Lucas S."/>
            <person name="Lapidus A."/>
            <person name="Barry K."/>
            <person name="Glavina del Rio T."/>
            <person name="Dalin E."/>
            <person name="Tice H."/>
            <person name="Pitluck S."/>
            <person name="Saunders E."/>
            <person name="Brettin T."/>
            <person name="Bruce D."/>
            <person name="Detter J.C."/>
            <person name="Han C."/>
            <person name="Schmutz J."/>
            <person name="Larimer F."/>
            <person name="Land M."/>
            <person name="Hauser L."/>
            <person name="Kyrpides N."/>
            <person name="Ivanova N."/>
            <person name="Biddle J.F."/>
            <person name="Zhang Z."/>
            <person name="Fitz-Gibbon S.T."/>
            <person name="Lowe T.M."/>
            <person name="Saltikov C."/>
            <person name="House C.H."/>
            <person name="Richardson P."/>
        </authorList>
    </citation>
    <scope>NUCLEOTIDE SEQUENCE [LARGE SCALE GENOMIC DNA]</scope>
    <source>
        <strain>ATCC 700844 / DSM 13496 / JCM 10307 / IC-167</strain>
    </source>
</reference>